<keyword id="KW-0150">Chloroplast</keyword>
<keyword id="KW-0934">Plastid</keyword>
<keyword id="KW-0687">Ribonucleoprotein</keyword>
<keyword id="KW-0689">Ribosomal protein</keyword>
<evidence type="ECO:0000255" key="1">
    <source>
        <dbReference type="HAMAP-Rule" id="MF_00340"/>
    </source>
</evidence>
<evidence type="ECO:0000305" key="2"/>
<comment type="subcellular location">
    <subcellularLocation>
        <location>Plastid</location>
        <location>Chloroplast</location>
    </subcellularLocation>
</comment>
<comment type="similarity">
    <text evidence="1">Belongs to the bacterial ribosomal protein bL32 family.</text>
</comment>
<reference key="1">
    <citation type="journal article" date="2007" name="BMC Genomics">
        <title>Rapid evolutionary change of common bean (Phaseolus vulgaris L) plastome, and the genomic diversification of legume chloroplasts.</title>
        <authorList>
            <person name="Guo X."/>
            <person name="Castillo-Ramirez S."/>
            <person name="Gonzalez V."/>
            <person name="Bustos P."/>
            <person name="Fernandez-Vazquez J.L."/>
            <person name="Santamaria R.I."/>
            <person name="Arellano J."/>
            <person name="Cevallos M.A."/>
            <person name="Davila G."/>
        </authorList>
    </citation>
    <scope>NUCLEOTIDE SEQUENCE [LARGE SCALE GENOMIC DNA]</scope>
    <source>
        <strain>cv. Negro Jamapa</strain>
    </source>
</reference>
<reference key="2">
    <citation type="submission" date="2007-10" db="EMBL/GenBank/DDBJ databases">
        <title>Complete nucleotide sequence of the plastid genome of the common bean, Phaseolus vulgaris.</title>
        <authorList>
            <person name="Moore M.J."/>
            <person name="Triplett E.W."/>
            <person name="Broughton W.J."/>
            <person name="Soltis P.S."/>
            <person name="Soltis D.E."/>
        </authorList>
    </citation>
    <scope>NUCLEOTIDE SEQUENCE [LARGE SCALE GENOMIC DNA]</scope>
</reference>
<accession>A4GGE4</accession>
<accession>A8W850</accession>
<protein>
    <recommendedName>
        <fullName evidence="1">Large ribosomal subunit protein bL32c</fullName>
    </recommendedName>
    <alternativeName>
        <fullName evidence="2">50S ribosomal protein L32, chloroplastic</fullName>
    </alternativeName>
</protein>
<geneLocation type="chloroplast"/>
<sequence>MAVPKKRTSISKKIIRNTLWKKKGYFTALKAFSLAQSLFTGNSKSFFCNKYKR</sequence>
<dbReference type="EMBL" id="DQ886273">
    <property type="protein sequence ID" value="ABH88126.1"/>
    <property type="molecule type" value="Genomic_DNA"/>
</dbReference>
<dbReference type="EMBL" id="EU196765">
    <property type="protein sequence ID" value="ABW22820.1"/>
    <property type="molecule type" value="Genomic_DNA"/>
</dbReference>
<dbReference type="RefSeq" id="YP_001122845.1">
    <property type="nucleotide sequence ID" value="NC_009259.1"/>
</dbReference>
<dbReference type="SMR" id="A4GGE4"/>
<dbReference type="GeneID" id="4961766"/>
<dbReference type="KEGG" id="pvu:4961766"/>
<dbReference type="GO" id="GO:0009507">
    <property type="term" value="C:chloroplast"/>
    <property type="evidence" value="ECO:0007669"/>
    <property type="project" value="UniProtKB-SubCell"/>
</dbReference>
<dbReference type="GO" id="GO:0015934">
    <property type="term" value="C:large ribosomal subunit"/>
    <property type="evidence" value="ECO:0007669"/>
    <property type="project" value="InterPro"/>
</dbReference>
<dbReference type="GO" id="GO:0003735">
    <property type="term" value="F:structural constituent of ribosome"/>
    <property type="evidence" value="ECO:0007669"/>
    <property type="project" value="InterPro"/>
</dbReference>
<dbReference type="GO" id="GO:0006412">
    <property type="term" value="P:translation"/>
    <property type="evidence" value="ECO:0007669"/>
    <property type="project" value="UniProtKB-UniRule"/>
</dbReference>
<dbReference type="HAMAP" id="MF_00340">
    <property type="entry name" value="Ribosomal_bL32"/>
    <property type="match status" value="1"/>
</dbReference>
<dbReference type="InterPro" id="IPR002677">
    <property type="entry name" value="Ribosomal_bL32"/>
</dbReference>
<dbReference type="InterPro" id="IPR044958">
    <property type="entry name" value="Ribosomal_bL32_plant/cyanobact"/>
</dbReference>
<dbReference type="PANTHER" id="PTHR36083">
    <property type="entry name" value="50S RIBOSOMAL PROTEIN L32, CHLOROPLASTIC"/>
    <property type="match status" value="1"/>
</dbReference>
<dbReference type="PANTHER" id="PTHR36083:SF1">
    <property type="entry name" value="LARGE RIBOSOMAL SUBUNIT PROTEIN BL32C"/>
    <property type="match status" value="1"/>
</dbReference>
<dbReference type="Pfam" id="PF01783">
    <property type="entry name" value="Ribosomal_L32p"/>
    <property type="match status" value="1"/>
</dbReference>
<feature type="chain" id="PRO_0000296620" description="Large ribosomal subunit protein bL32c">
    <location>
        <begin position="1"/>
        <end position="53"/>
    </location>
</feature>
<proteinExistence type="inferred from homology"/>
<name>RK32_PHAVU</name>
<organism>
    <name type="scientific">Phaseolus vulgaris</name>
    <name type="common">Kidney bean</name>
    <name type="synonym">French bean</name>
    <dbReference type="NCBI Taxonomy" id="3885"/>
    <lineage>
        <taxon>Eukaryota</taxon>
        <taxon>Viridiplantae</taxon>
        <taxon>Streptophyta</taxon>
        <taxon>Embryophyta</taxon>
        <taxon>Tracheophyta</taxon>
        <taxon>Spermatophyta</taxon>
        <taxon>Magnoliopsida</taxon>
        <taxon>eudicotyledons</taxon>
        <taxon>Gunneridae</taxon>
        <taxon>Pentapetalae</taxon>
        <taxon>rosids</taxon>
        <taxon>fabids</taxon>
        <taxon>Fabales</taxon>
        <taxon>Fabaceae</taxon>
        <taxon>Papilionoideae</taxon>
        <taxon>50 kb inversion clade</taxon>
        <taxon>NPAAA clade</taxon>
        <taxon>indigoferoid/millettioid clade</taxon>
        <taxon>Phaseoleae</taxon>
        <taxon>Phaseolus</taxon>
    </lineage>
</organism>
<gene>
    <name evidence="1" type="primary">rpl32</name>
</gene>